<gene>
    <name type="primary">glcT</name>
    <name type="ordered locus">Sca_0998</name>
</gene>
<proteinExistence type="evidence at protein level"/>
<reference key="1">
    <citation type="journal article" date="2000" name="Microbiology">
        <title>Regulation of the glucose-specific phosphotransferase system (PTS) of Staphylococcus carnosus by the antiterminator protein GlcT.</title>
        <authorList>
            <person name="Knezevic I."/>
            <person name="Bachem S."/>
            <person name="Sickmann A."/>
            <person name="Meyer H.E."/>
            <person name="Stuelke J."/>
            <person name="Hengstenberg W."/>
        </authorList>
    </citation>
    <scope>NUCLEOTIDE SEQUENCE [GENOMIC DNA]</scope>
    <scope>PARTIAL PROTEIN SEQUENCE</scope>
    <scope>FUNCTION AS AN ANTITERMINATOR</scope>
    <scope>MASS SPECTROMETRY</scope>
    <scope>SUBUNIT</scope>
    <scope>PHOSPHORYLATION AT HIS-105</scope>
</reference>
<reference key="2">
    <citation type="journal article" date="2009" name="Appl. Environ. Microbiol.">
        <title>Genome analysis of the meat starter culture bacterium Staphylococcus carnosus TM300.</title>
        <authorList>
            <person name="Rosenstein R."/>
            <person name="Nerz C."/>
            <person name="Biswas L."/>
            <person name="Resch A."/>
            <person name="Raddatz G."/>
            <person name="Schuster S.C."/>
            <person name="Goetz F."/>
        </authorList>
    </citation>
    <scope>NUCLEOTIDE SEQUENCE [LARGE SCALE GENOMIC DNA]</scope>
    <source>
        <strain>TM300</strain>
    </source>
</reference>
<organism>
    <name type="scientific">Staphylococcus carnosus (strain TM300)</name>
    <dbReference type="NCBI Taxonomy" id="396513"/>
    <lineage>
        <taxon>Bacteria</taxon>
        <taxon>Bacillati</taxon>
        <taxon>Bacillota</taxon>
        <taxon>Bacilli</taxon>
        <taxon>Bacillales</taxon>
        <taxon>Staphylococcaceae</taxon>
        <taxon>Staphylococcus</taxon>
    </lineage>
</organism>
<dbReference type="EMBL" id="Y14029">
    <property type="protein sequence ID" value="CAA74358.1"/>
    <property type="molecule type" value="Genomic_DNA"/>
</dbReference>
<dbReference type="EMBL" id="AM295250">
    <property type="protein sequence ID" value="CAL27906.1"/>
    <property type="molecule type" value="Genomic_DNA"/>
</dbReference>
<dbReference type="RefSeq" id="WP_015900247.1">
    <property type="nucleotide sequence ID" value="NC_012121.1"/>
</dbReference>
<dbReference type="SMR" id="O33618"/>
<dbReference type="iPTMnet" id="O33618"/>
<dbReference type="GeneID" id="93793424"/>
<dbReference type="KEGG" id="sca:SCA_0998"/>
<dbReference type="eggNOG" id="COG3711">
    <property type="taxonomic scope" value="Bacteria"/>
</dbReference>
<dbReference type="HOGENOM" id="CLU_078802_0_0_9"/>
<dbReference type="OrthoDB" id="9813552at2"/>
<dbReference type="BioCyc" id="SCAR396513:SCA_RS05010-MONOMER"/>
<dbReference type="Proteomes" id="UP000000444">
    <property type="component" value="Chromosome"/>
</dbReference>
<dbReference type="GO" id="GO:0003723">
    <property type="term" value="F:RNA binding"/>
    <property type="evidence" value="ECO:0007669"/>
    <property type="project" value="UniProtKB-KW"/>
</dbReference>
<dbReference type="GO" id="GO:0045893">
    <property type="term" value="P:positive regulation of DNA-templated transcription"/>
    <property type="evidence" value="ECO:0007669"/>
    <property type="project" value="InterPro"/>
</dbReference>
<dbReference type="Gene3D" id="1.20.58.1950">
    <property type="match status" value="1"/>
</dbReference>
<dbReference type="Gene3D" id="1.20.890.100">
    <property type="match status" value="1"/>
</dbReference>
<dbReference type="Gene3D" id="2.30.24.10">
    <property type="entry name" value="CAT RNA-binding domain"/>
    <property type="match status" value="1"/>
</dbReference>
<dbReference type="Gene3D" id="1.10.1790.10">
    <property type="entry name" value="PRD domain"/>
    <property type="match status" value="1"/>
</dbReference>
<dbReference type="InterPro" id="IPR050661">
    <property type="entry name" value="BglG_antiterminators"/>
</dbReference>
<dbReference type="InterPro" id="IPR004341">
    <property type="entry name" value="CAT_RNA-bd_dom"/>
</dbReference>
<dbReference type="InterPro" id="IPR036650">
    <property type="entry name" value="CAT_RNA-bd_dom_sf"/>
</dbReference>
<dbReference type="InterPro" id="IPR011608">
    <property type="entry name" value="PRD"/>
</dbReference>
<dbReference type="InterPro" id="IPR036634">
    <property type="entry name" value="PRD_sf"/>
</dbReference>
<dbReference type="InterPro" id="IPR001550">
    <property type="entry name" value="Transcrpt_antitermin_CS"/>
</dbReference>
<dbReference type="NCBIfam" id="NF047357">
    <property type="entry name" value="antiterm_GlcT"/>
    <property type="match status" value="1"/>
</dbReference>
<dbReference type="PANTHER" id="PTHR30185">
    <property type="entry name" value="CRYPTIC BETA-GLUCOSIDE BGL OPERON ANTITERMINATOR"/>
    <property type="match status" value="1"/>
</dbReference>
<dbReference type="PANTHER" id="PTHR30185:SF16">
    <property type="entry name" value="PROTEIN GLCT"/>
    <property type="match status" value="1"/>
</dbReference>
<dbReference type="Pfam" id="PF03123">
    <property type="entry name" value="CAT_RBD"/>
    <property type="match status" value="1"/>
</dbReference>
<dbReference type="Pfam" id="PF00874">
    <property type="entry name" value="PRD"/>
    <property type="match status" value="2"/>
</dbReference>
<dbReference type="SMART" id="SM01061">
    <property type="entry name" value="CAT_RBD"/>
    <property type="match status" value="1"/>
</dbReference>
<dbReference type="SUPFAM" id="SSF63520">
    <property type="entry name" value="PTS-regulatory domain, PRD"/>
    <property type="match status" value="2"/>
</dbReference>
<dbReference type="SUPFAM" id="SSF50151">
    <property type="entry name" value="SacY-like RNA-binding domain"/>
    <property type="match status" value="1"/>
</dbReference>
<dbReference type="PROSITE" id="PS00654">
    <property type="entry name" value="PRD_1"/>
    <property type="match status" value="1"/>
</dbReference>
<dbReference type="PROSITE" id="PS51372">
    <property type="entry name" value="PRD_2"/>
    <property type="match status" value="2"/>
</dbReference>
<comment type="function">
    <text evidence="2">Mediates positive regulation of the ptsG/glcA and glcB genes by functioning as an antiterminator factor of transcription via its interaction with the RNA-antiterminator (RAT) sequence located upstream of the ptsG/glcA gene.</text>
</comment>
<comment type="subunit">
    <text evidence="2">Homodimer.</text>
</comment>
<comment type="PTM">
    <text evidence="2">Phosphorylated by HPr, which enhances dimer formation and leads to activation.</text>
</comment>
<comment type="mass spectrometry" mass="33504.0" method="Electrospray" evidence="2"/>
<comment type="mass spectrometry" mass="33586.0" method="Electrospray" evidence="2">
    <text>With phosphorylation at His-105.</text>
</comment>
<comment type="similarity">
    <text evidence="3">Belongs to the transcriptional antiterminator BglG family. GlcT subfamily.</text>
</comment>
<keyword id="KW-0010">Activator</keyword>
<keyword id="KW-0903">Direct protein sequencing</keyword>
<keyword id="KW-0597">Phosphoprotein</keyword>
<keyword id="KW-1185">Reference proteome</keyword>
<keyword id="KW-0677">Repeat</keyword>
<keyword id="KW-0694">RNA-binding</keyword>
<keyword id="KW-0804">Transcription</keyword>
<keyword id="KW-0805">Transcription regulation</keyword>
<sequence length="287" mass="33632">MSNYVIEKTLNNNVIICTDENQHHEVVLIGKGIGFNKKKGMELSDSVMIDKVYKLEQKKDQDHYKALVEIADDNVLQTIIEAMDIITHADRTVVDKDLMVALTDHILFAYKRIKQHQFIKNPFLIETKQLYSESYQIAVSVIEHLNKLLDIEFPEDEIGFIALHIASSKDDLSLHEVRLTNEIINKSILIMEHDLKYKIDTNSIQYQRFIRHIQFLIRRLQKGEIIQVNDEFGNMLKAHYPLCYNIAVKIIKMMQQHLDVEVYEAELIYLTLHINHFTQQNEKNTNV</sequence>
<protein>
    <recommendedName>
        <fullName>GlcA/glcB genes antiterminator</fullName>
    </recommendedName>
    <alternativeName>
        <fullName>PtsG operon antiterminator</fullName>
    </alternativeName>
</protein>
<name>GLCT_STACT</name>
<accession>O33618</accession>
<accession>B9DP61</accession>
<feature type="chain" id="PRO_0000351420" description="GlcA/glcB genes antiterminator">
    <location>
        <begin position="1"/>
        <end position="287"/>
    </location>
</feature>
<feature type="domain" description="PRD 1" evidence="1">
    <location>
        <begin position="67"/>
        <end position="175"/>
    </location>
</feature>
<feature type="domain" description="PRD 2" evidence="1">
    <location>
        <begin position="176"/>
        <end position="284"/>
    </location>
</feature>
<feature type="modified residue" description="Phosphohistidine; by HPr" evidence="1 2">
    <location>
        <position position="105"/>
    </location>
</feature>
<evidence type="ECO:0000255" key="1">
    <source>
        <dbReference type="PROSITE-ProRule" id="PRU00704"/>
    </source>
</evidence>
<evidence type="ECO:0000269" key="2">
    <source>
    </source>
</evidence>
<evidence type="ECO:0000305" key="3"/>